<dbReference type="EMBL" id="CP000993">
    <property type="protein sequence ID" value="ACH94679.1"/>
    <property type="molecule type" value="Genomic_DNA"/>
</dbReference>
<dbReference type="RefSeq" id="WP_012538906.1">
    <property type="nucleotide sequence ID" value="NC_011244.1"/>
</dbReference>
<dbReference type="SMR" id="B5RRP5"/>
<dbReference type="KEGG" id="bre:BRE_443"/>
<dbReference type="HOGENOM" id="CLU_016535_2_0_12"/>
<dbReference type="Proteomes" id="UP000000612">
    <property type="component" value="Chromosome"/>
</dbReference>
<dbReference type="GO" id="GO:0005886">
    <property type="term" value="C:plasma membrane"/>
    <property type="evidence" value="ECO:0007669"/>
    <property type="project" value="UniProtKB-SubCell"/>
</dbReference>
<dbReference type="GO" id="GO:0032977">
    <property type="term" value="F:membrane insertase activity"/>
    <property type="evidence" value="ECO:0007669"/>
    <property type="project" value="InterPro"/>
</dbReference>
<dbReference type="GO" id="GO:0051205">
    <property type="term" value="P:protein insertion into membrane"/>
    <property type="evidence" value="ECO:0007669"/>
    <property type="project" value="TreeGrafter"/>
</dbReference>
<dbReference type="GO" id="GO:0015031">
    <property type="term" value="P:protein transport"/>
    <property type="evidence" value="ECO:0007669"/>
    <property type="project" value="UniProtKB-KW"/>
</dbReference>
<dbReference type="CDD" id="cd20070">
    <property type="entry name" value="5TM_YidC_Alb3"/>
    <property type="match status" value="1"/>
</dbReference>
<dbReference type="CDD" id="cd19961">
    <property type="entry name" value="EcYidC-like_peri"/>
    <property type="match status" value="1"/>
</dbReference>
<dbReference type="Gene3D" id="2.70.98.90">
    <property type="match status" value="1"/>
</dbReference>
<dbReference type="HAMAP" id="MF_01810">
    <property type="entry name" value="YidC_type1"/>
    <property type="match status" value="1"/>
</dbReference>
<dbReference type="InterPro" id="IPR019998">
    <property type="entry name" value="Membr_insert_YidC"/>
</dbReference>
<dbReference type="InterPro" id="IPR028053">
    <property type="entry name" value="Membr_insert_YidC_N"/>
</dbReference>
<dbReference type="InterPro" id="IPR001708">
    <property type="entry name" value="YidC/ALB3/OXA1/COX18"/>
</dbReference>
<dbReference type="InterPro" id="IPR028055">
    <property type="entry name" value="YidC/Oxa/ALB_C"/>
</dbReference>
<dbReference type="InterPro" id="IPR047196">
    <property type="entry name" value="YidC_ALB_C"/>
</dbReference>
<dbReference type="InterPro" id="IPR038221">
    <property type="entry name" value="YidC_periplasmic_sf"/>
</dbReference>
<dbReference type="NCBIfam" id="NF002358">
    <property type="entry name" value="PRK01318.2-5"/>
    <property type="match status" value="1"/>
</dbReference>
<dbReference type="NCBIfam" id="TIGR03592">
    <property type="entry name" value="yidC_oxa1_cterm"/>
    <property type="match status" value="1"/>
</dbReference>
<dbReference type="PANTHER" id="PTHR12428:SF65">
    <property type="entry name" value="CYTOCHROME C OXIDASE ASSEMBLY PROTEIN COX18, MITOCHONDRIAL"/>
    <property type="match status" value="1"/>
</dbReference>
<dbReference type="PANTHER" id="PTHR12428">
    <property type="entry name" value="OXA1"/>
    <property type="match status" value="1"/>
</dbReference>
<dbReference type="Pfam" id="PF02096">
    <property type="entry name" value="60KD_IMP"/>
    <property type="match status" value="1"/>
</dbReference>
<dbReference type="Pfam" id="PF14849">
    <property type="entry name" value="YidC_periplas"/>
    <property type="match status" value="1"/>
</dbReference>
<dbReference type="PRINTS" id="PR00701">
    <property type="entry name" value="60KDINNERMP"/>
</dbReference>
<dbReference type="PRINTS" id="PR01900">
    <property type="entry name" value="YIDCPROTEIN"/>
</dbReference>
<accession>B5RRP5</accession>
<reference key="1">
    <citation type="journal article" date="2008" name="PLoS Genet.">
        <title>The genome of Borrelia recurrentis, the agent of deadly louse-borne relapsing fever, is a degraded subset of tick-borne Borrelia duttonii.</title>
        <authorList>
            <person name="Lescot M."/>
            <person name="Audic S."/>
            <person name="Robert C."/>
            <person name="Nguyen T.T."/>
            <person name="Blanc G."/>
            <person name="Cutler S.J."/>
            <person name="Wincker P."/>
            <person name="Couloux A."/>
            <person name="Claverie J.-M."/>
            <person name="Raoult D."/>
            <person name="Drancourt M."/>
        </authorList>
    </citation>
    <scope>NUCLEOTIDE SEQUENCE [LARGE SCALE GENOMIC DNA]</scope>
    <source>
        <strain>A1</strain>
    </source>
</reference>
<organism>
    <name type="scientific">Borrelia recurrentis (strain A1)</name>
    <dbReference type="NCBI Taxonomy" id="412418"/>
    <lineage>
        <taxon>Bacteria</taxon>
        <taxon>Pseudomonadati</taxon>
        <taxon>Spirochaetota</taxon>
        <taxon>Spirochaetia</taxon>
        <taxon>Spirochaetales</taxon>
        <taxon>Borreliaceae</taxon>
        <taxon>Borrelia</taxon>
    </lineage>
</organism>
<feature type="chain" id="PRO_1000187635" description="Membrane protein insertase YidC">
    <location>
        <begin position="1"/>
        <end position="545"/>
    </location>
</feature>
<feature type="transmembrane region" description="Helical" evidence="1">
    <location>
        <begin position="10"/>
        <end position="30"/>
    </location>
</feature>
<feature type="transmembrane region" description="Helical" evidence="1">
    <location>
        <begin position="319"/>
        <end position="339"/>
    </location>
</feature>
<feature type="transmembrane region" description="Helical" evidence="1">
    <location>
        <begin position="341"/>
        <end position="361"/>
    </location>
</feature>
<feature type="transmembrane region" description="Helical" evidence="1">
    <location>
        <begin position="407"/>
        <end position="427"/>
    </location>
</feature>
<feature type="transmembrane region" description="Helical" evidence="1">
    <location>
        <begin position="467"/>
        <end position="487"/>
    </location>
</feature>
<feature type="transmembrane region" description="Helical" evidence="1">
    <location>
        <begin position="502"/>
        <end position="522"/>
    </location>
</feature>
<sequence>MSPNKRILRAVYLSLFFIGIFMLLDDFLFSRKASSFMNEEIKFDLNKDFDIDNSLIDEDFTFNLSDNSEDINVDTDIYHATFATFGGNLISLKLKNHLNLDKKPTEIVKVHPQNQSLFYITLDKLSKSLFLYEQIDSHVHDFKTNVEVNGKYYEYIKRYTFSKSNEYLIKLEIFLNNIDVNDDIGIDFYKFVLNSGIEELSAKGKLQYNNYLSHAIYYDTKLRYGKDGLNIANPKWVGAGTKYFEVLVSKENMKVEFKHENKVLNAFILNKLDNKNVSDVFYIYAGPRDNKYLDIFNQRELNSFGLSNVEFGMSVEKSLLYFLQVPMQLIMQIFYNVIPNWGLSIMFLTIVVRILIFPLTFKSFRATAELSKLQPKMKEIQVKFKSDPKRLNEEMGKLYREEGVNPIGGCFPILLQLPVFFALYGLVNNFFVLRGASFIPGWIDDLSIGDSIYYFGYKVFAWTDIRILPFIMMITQLLSTIVSSNVSFKSLGSQQKFLYFGMPIMFFFILYDMPSGLLIYWITTNIFTILQQYYIKMNLSERRNK</sequence>
<comment type="function">
    <text evidence="1">Required for the insertion and/or proper folding and/or complex formation of integral membrane proteins into the membrane. Involved in integration of membrane proteins that insert both dependently and independently of the Sec translocase complex, as well as at least some lipoproteins. Aids folding of multispanning membrane proteins.</text>
</comment>
<comment type="subunit">
    <text evidence="1">Interacts with the Sec translocase complex via SecD. Specifically interacts with transmembrane segments of nascent integral membrane proteins during membrane integration.</text>
</comment>
<comment type="subcellular location">
    <subcellularLocation>
        <location evidence="1">Cell inner membrane</location>
        <topology evidence="1">Multi-pass membrane protein</topology>
    </subcellularLocation>
</comment>
<comment type="similarity">
    <text evidence="1">Belongs to the OXA1/ALB3/YidC family. Type 1 subfamily.</text>
</comment>
<proteinExistence type="inferred from homology"/>
<evidence type="ECO:0000255" key="1">
    <source>
        <dbReference type="HAMAP-Rule" id="MF_01810"/>
    </source>
</evidence>
<keyword id="KW-0997">Cell inner membrane</keyword>
<keyword id="KW-1003">Cell membrane</keyword>
<keyword id="KW-0143">Chaperone</keyword>
<keyword id="KW-0472">Membrane</keyword>
<keyword id="KW-0653">Protein transport</keyword>
<keyword id="KW-0812">Transmembrane</keyword>
<keyword id="KW-1133">Transmembrane helix</keyword>
<keyword id="KW-0813">Transport</keyword>
<gene>
    <name evidence="1" type="primary">yidC</name>
    <name type="ordered locus">BRE_443</name>
</gene>
<name>YIDC_BORRA</name>
<protein>
    <recommendedName>
        <fullName evidence="1">Membrane protein insertase YidC</fullName>
    </recommendedName>
    <alternativeName>
        <fullName evidence="1">Foldase YidC</fullName>
    </alternativeName>
    <alternativeName>
        <fullName evidence="1">Membrane integrase YidC</fullName>
    </alternativeName>
    <alternativeName>
        <fullName evidence="1">Membrane protein YidC</fullName>
    </alternativeName>
</protein>